<feature type="chain" id="PRO_1000119532" description="Glutaminase">
    <location>
        <begin position="1"/>
        <end position="309"/>
    </location>
</feature>
<feature type="binding site" evidence="1">
    <location>
        <position position="64"/>
    </location>
    <ligand>
        <name>substrate</name>
    </ligand>
</feature>
<feature type="binding site" evidence="1">
    <location>
        <position position="114"/>
    </location>
    <ligand>
        <name>substrate</name>
    </ligand>
</feature>
<feature type="binding site" evidence="1">
    <location>
        <position position="160"/>
    </location>
    <ligand>
        <name>substrate</name>
    </ligand>
</feature>
<feature type="binding site" evidence="1">
    <location>
        <position position="167"/>
    </location>
    <ligand>
        <name>substrate</name>
    </ligand>
</feature>
<feature type="binding site" evidence="1">
    <location>
        <position position="191"/>
    </location>
    <ligand>
        <name>substrate</name>
    </ligand>
</feature>
<feature type="binding site" evidence="1">
    <location>
        <position position="243"/>
    </location>
    <ligand>
        <name>substrate</name>
    </ligand>
</feature>
<feature type="binding site" evidence="1">
    <location>
        <position position="261"/>
    </location>
    <ligand>
        <name>substrate</name>
    </ligand>
</feature>
<reference key="1">
    <citation type="submission" date="2007-12" db="EMBL/GenBank/DDBJ databases">
        <title>Complete sequence of Methylobacterium extorquens PA1.</title>
        <authorList>
            <consortium name="US DOE Joint Genome Institute"/>
            <person name="Copeland A."/>
            <person name="Lucas S."/>
            <person name="Lapidus A."/>
            <person name="Barry K."/>
            <person name="Glavina del Rio T."/>
            <person name="Dalin E."/>
            <person name="Tice H."/>
            <person name="Pitluck S."/>
            <person name="Saunders E."/>
            <person name="Brettin T."/>
            <person name="Bruce D."/>
            <person name="Detter J.C."/>
            <person name="Han C."/>
            <person name="Schmutz J."/>
            <person name="Larimer F."/>
            <person name="Land M."/>
            <person name="Hauser L."/>
            <person name="Kyrpides N."/>
            <person name="Kim E."/>
            <person name="Marx C."/>
            <person name="Richardson P."/>
        </authorList>
    </citation>
    <scope>NUCLEOTIDE SEQUENCE [LARGE SCALE GENOMIC DNA]</scope>
    <source>
        <strain>PA1</strain>
    </source>
</reference>
<comment type="catalytic activity">
    <reaction evidence="1">
        <text>L-glutamine + H2O = L-glutamate + NH4(+)</text>
        <dbReference type="Rhea" id="RHEA:15889"/>
        <dbReference type="ChEBI" id="CHEBI:15377"/>
        <dbReference type="ChEBI" id="CHEBI:28938"/>
        <dbReference type="ChEBI" id="CHEBI:29985"/>
        <dbReference type="ChEBI" id="CHEBI:58359"/>
        <dbReference type="EC" id="3.5.1.2"/>
    </reaction>
</comment>
<comment type="subunit">
    <text evidence="1">Homotetramer.</text>
</comment>
<comment type="similarity">
    <text evidence="1">Belongs to the glutaminase family.</text>
</comment>
<gene>
    <name evidence="1" type="primary">glsA</name>
    <name type="ordered locus">Mext_2375</name>
</gene>
<organism>
    <name type="scientific">Methylorubrum extorquens (strain PA1)</name>
    <name type="common">Methylobacterium extorquens</name>
    <dbReference type="NCBI Taxonomy" id="419610"/>
    <lineage>
        <taxon>Bacteria</taxon>
        <taxon>Pseudomonadati</taxon>
        <taxon>Pseudomonadota</taxon>
        <taxon>Alphaproteobacteria</taxon>
        <taxon>Hyphomicrobiales</taxon>
        <taxon>Methylobacteriaceae</taxon>
        <taxon>Methylorubrum</taxon>
    </lineage>
</organism>
<evidence type="ECO:0000255" key="1">
    <source>
        <dbReference type="HAMAP-Rule" id="MF_00313"/>
    </source>
</evidence>
<keyword id="KW-0378">Hydrolase</keyword>
<name>GLSA_METEP</name>
<accession>A9W5B4</accession>
<protein>
    <recommendedName>
        <fullName evidence="1">Glutaminase</fullName>
        <ecNumber evidence="1">3.5.1.2</ecNumber>
    </recommendedName>
</protein>
<dbReference type="EC" id="3.5.1.2" evidence="1"/>
<dbReference type="EMBL" id="CP000908">
    <property type="protein sequence ID" value="ABY30770.1"/>
    <property type="molecule type" value="Genomic_DNA"/>
</dbReference>
<dbReference type="RefSeq" id="WP_012253805.1">
    <property type="nucleotide sequence ID" value="NC_010172.1"/>
</dbReference>
<dbReference type="SMR" id="A9W5B4"/>
<dbReference type="KEGG" id="mex:Mext_2375"/>
<dbReference type="eggNOG" id="COG2066">
    <property type="taxonomic scope" value="Bacteria"/>
</dbReference>
<dbReference type="HOGENOM" id="CLU_027932_1_1_5"/>
<dbReference type="BioCyc" id="MEXT419610:MEXT_RS11965-MONOMER"/>
<dbReference type="GO" id="GO:0004359">
    <property type="term" value="F:glutaminase activity"/>
    <property type="evidence" value="ECO:0007669"/>
    <property type="project" value="UniProtKB-UniRule"/>
</dbReference>
<dbReference type="GO" id="GO:0006537">
    <property type="term" value="P:glutamate biosynthetic process"/>
    <property type="evidence" value="ECO:0007669"/>
    <property type="project" value="TreeGrafter"/>
</dbReference>
<dbReference type="GO" id="GO:0006543">
    <property type="term" value="P:glutamine catabolic process"/>
    <property type="evidence" value="ECO:0007669"/>
    <property type="project" value="TreeGrafter"/>
</dbReference>
<dbReference type="FunFam" id="3.40.710.10:FF:000005">
    <property type="entry name" value="Glutaminase"/>
    <property type="match status" value="1"/>
</dbReference>
<dbReference type="Gene3D" id="3.40.710.10">
    <property type="entry name" value="DD-peptidase/beta-lactamase superfamily"/>
    <property type="match status" value="1"/>
</dbReference>
<dbReference type="HAMAP" id="MF_00313">
    <property type="entry name" value="Glutaminase"/>
    <property type="match status" value="1"/>
</dbReference>
<dbReference type="InterPro" id="IPR012338">
    <property type="entry name" value="Beta-lactam/transpept-like"/>
</dbReference>
<dbReference type="InterPro" id="IPR015868">
    <property type="entry name" value="Glutaminase"/>
</dbReference>
<dbReference type="NCBIfam" id="TIGR03814">
    <property type="entry name" value="Gln_ase"/>
    <property type="match status" value="1"/>
</dbReference>
<dbReference type="NCBIfam" id="NF002133">
    <property type="entry name" value="PRK00971.1-2"/>
    <property type="match status" value="1"/>
</dbReference>
<dbReference type="PANTHER" id="PTHR12544">
    <property type="entry name" value="GLUTAMINASE"/>
    <property type="match status" value="1"/>
</dbReference>
<dbReference type="PANTHER" id="PTHR12544:SF29">
    <property type="entry name" value="GLUTAMINASE"/>
    <property type="match status" value="1"/>
</dbReference>
<dbReference type="Pfam" id="PF04960">
    <property type="entry name" value="Glutaminase"/>
    <property type="match status" value="1"/>
</dbReference>
<dbReference type="SUPFAM" id="SSF56601">
    <property type="entry name" value="beta-lactamase/transpeptidase-like"/>
    <property type="match status" value="1"/>
</dbReference>
<proteinExistence type="inferred from homology"/>
<sequence>MPDLDSIVKDIAAEMRARPDRGAVASYIPELARVDAQGFGLVVIDGEGRVAAGGDADTPFSIQSISKVFTLTLALGMVGDRLWRRVGREPSGSPFNSIVQLEREHGIPRNPFINAGAIAVTDLILSGHQPREALGEILRFMQFVAQDDSITIDERVAASEKRTGFRNAALANYMRSFDVIENPVDYTLGVYFHHCAIAMTCRQLATAGLFLAYSGHHPLAGHSVISAERARRINAIMLTCGHYDGSGDFAYRVGLPGKSGVGGGILAVAPGKASICVWSPGLDAAGNSHLGRIALEMLVKRTGWSIFGV</sequence>